<keyword id="KW-0687">Ribonucleoprotein</keyword>
<keyword id="KW-0689">Ribosomal protein</keyword>
<keyword id="KW-0694">RNA-binding</keyword>
<keyword id="KW-0699">rRNA-binding</keyword>
<proteinExistence type="inferred from homology"/>
<gene>
    <name evidence="1" type="primary">rplV</name>
    <name type="ordered locus">SPT_0261</name>
</gene>
<feature type="chain" id="PRO_1000166090" description="Large ribosomal subunit protein uL22">
    <location>
        <begin position="1"/>
        <end position="114"/>
    </location>
</feature>
<dbReference type="EMBL" id="CP000921">
    <property type="protein sequence ID" value="ACO23792.1"/>
    <property type="molecule type" value="Genomic_DNA"/>
</dbReference>
<dbReference type="RefSeq" id="WP_000818137.1">
    <property type="nucleotide sequence ID" value="NC_012469.1"/>
</dbReference>
<dbReference type="SMR" id="C1CP93"/>
<dbReference type="GeneID" id="93738962"/>
<dbReference type="KEGG" id="snt:SPT_0261"/>
<dbReference type="HOGENOM" id="CLU_083987_3_3_9"/>
<dbReference type="GO" id="GO:0022625">
    <property type="term" value="C:cytosolic large ribosomal subunit"/>
    <property type="evidence" value="ECO:0007669"/>
    <property type="project" value="TreeGrafter"/>
</dbReference>
<dbReference type="GO" id="GO:0019843">
    <property type="term" value="F:rRNA binding"/>
    <property type="evidence" value="ECO:0007669"/>
    <property type="project" value="UniProtKB-UniRule"/>
</dbReference>
<dbReference type="GO" id="GO:0003735">
    <property type="term" value="F:structural constituent of ribosome"/>
    <property type="evidence" value="ECO:0007669"/>
    <property type="project" value="InterPro"/>
</dbReference>
<dbReference type="GO" id="GO:0006412">
    <property type="term" value="P:translation"/>
    <property type="evidence" value="ECO:0007669"/>
    <property type="project" value="UniProtKB-UniRule"/>
</dbReference>
<dbReference type="CDD" id="cd00336">
    <property type="entry name" value="Ribosomal_L22"/>
    <property type="match status" value="1"/>
</dbReference>
<dbReference type="FunFam" id="3.90.470.10:FF:000001">
    <property type="entry name" value="50S ribosomal protein L22"/>
    <property type="match status" value="1"/>
</dbReference>
<dbReference type="Gene3D" id="3.90.470.10">
    <property type="entry name" value="Ribosomal protein L22/L17"/>
    <property type="match status" value="1"/>
</dbReference>
<dbReference type="HAMAP" id="MF_01331_B">
    <property type="entry name" value="Ribosomal_uL22_B"/>
    <property type="match status" value="1"/>
</dbReference>
<dbReference type="InterPro" id="IPR001063">
    <property type="entry name" value="Ribosomal_uL22"/>
</dbReference>
<dbReference type="InterPro" id="IPR005727">
    <property type="entry name" value="Ribosomal_uL22_bac/chlpt-type"/>
</dbReference>
<dbReference type="InterPro" id="IPR047867">
    <property type="entry name" value="Ribosomal_uL22_bac/org-type"/>
</dbReference>
<dbReference type="InterPro" id="IPR018260">
    <property type="entry name" value="Ribosomal_uL22_CS"/>
</dbReference>
<dbReference type="InterPro" id="IPR036394">
    <property type="entry name" value="Ribosomal_uL22_sf"/>
</dbReference>
<dbReference type="NCBIfam" id="TIGR01044">
    <property type="entry name" value="rplV_bact"/>
    <property type="match status" value="1"/>
</dbReference>
<dbReference type="PANTHER" id="PTHR13501">
    <property type="entry name" value="CHLOROPLAST 50S RIBOSOMAL PROTEIN L22-RELATED"/>
    <property type="match status" value="1"/>
</dbReference>
<dbReference type="PANTHER" id="PTHR13501:SF8">
    <property type="entry name" value="LARGE RIBOSOMAL SUBUNIT PROTEIN UL22M"/>
    <property type="match status" value="1"/>
</dbReference>
<dbReference type="Pfam" id="PF00237">
    <property type="entry name" value="Ribosomal_L22"/>
    <property type="match status" value="1"/>
</dbReference>
<dbReference type="SUPFAM" id="SSF54843">
    <property type="entry name" value="Ribosomal protein L22"/>
    <property type="match status" value="1"/>
</dbReference>
<dbReference type="PROSITE" id="PS00464">
    <property type="entry name" value="RIBOSOMAL_L22"/>
    <property type="match status" value="1"/>
</dbReference>
<organism>
    <name type="scientific">Streptococcus pneumoniae (strain Taiwan19F-14)</name>
    <dbReference type="NCBI Taxonomy" id="487213"/>
    <lineage>
        <taxon>Bacteria</taxon>
        <taxon>Bacillati</taxon>
        <taxon>Bacillota</taxon>
        <taxon>Bacilli</taxon>
        <taxon>Lactobacillales</taxon>
        <taxon>Streptococcaceae</taxon>
        <taxon>Streptococcus</taxon>
    </lineage>
</organism>
<comment type="function">
    <text evidence="1">This protein binds specifically to 23S rRNA; its binding is stimulated by other ribosomal proteins, e.g. L4, L17, and L20. It is important during the early stages of 50S assembly. It makes multiple contacts with different domains of the 23S rRNA in the assembled 50S subunit and ribosome (By similarity).</text>
</comment>
<comment type="function">
    <text evidence="1">The globular domain of the protein is located near the polypeptide exit tunnel on the outside of the subunit, while an extended beta-hairpin is found that lines the wall of the exit tunnel in the center of the 70S ribosome.</text>
</comment>
<comment type="subunit">
    <text evidence="1">Part of the 50S ribosomal subunit.</text>
</comment>
<comment type="similarity">
    <text evidence="1">Belongs to the universal ribosomal protein uL22 family.</text>
</comment>
<evidence type="ECO:0000255" key="1">
    <source>
        <dbReference type="HAMAP-Rule" id="MF_01331"/>
    </source>
</evidence>
<evidence type="ECO:0000305" key="2"/>
<protein>
    <recommendedName>
        <fullName evidence="1">Large ribosomal subunit protein uL22</fullName>
    </recommendedName>
    <alternativeName>
        <fullName evidence="2">50S ribosomal protein L22</fullName>
    </alternativeName>
</protein>
<name>RL22_STRZT</name>
<sequence>MAEITSAKAMARTVRVSPRKSRLVLDNIRGKSVADAIAILTFTPNKAAEIILKVLNSAVANAENNFGLDKANLVVSEAFANEGPTMKRFRPRAKGSASPINKRTAHITVAVAEK</sequence>
<reference key="1">
    <citation type="journal article" date="2010" name="Genome Biol.">
        <title>Structure and dynamics of the pan-genome of Streptococcus pneumoniae and closely related species.</title>
        <authorList>
            <person name="Donati C."/>
            <person name="Hiller N.L."/>
            <person name="Tettelin H."/>
            <person name="Muzzi A."/>
            <person name="Croucher N.J."/>
            <person name="Angiuoli S.V."/>
            <person name="Oggioni M."/>
            <person name="Dunning Hotopp J.C."/>
            <person name="Hu F.Z."/>
            <person name="Riley D.R."/>
            <person name="Covacci A."/>
            <person name="Mitchell T.J."/>
            <person name="Bentley S.D."/>
            <person name="Kilian M."/>
            <person name="Ehrlich G.D."/>
            <person name="Rappuoli R."/>
            <person name="Moxon E.R."/>
            <person name="Masignani V."/>
        </authorList>
    </citation>
    <scope>NUCLEOTIDE SEQUENCE [LARGE SCALE GENOMIC DNA]</scope>
    <source>
        <strain>Taiwan19F-14</strain>
    </source>
</reference>
<accession>C1CP93</accession>